<comment type="function">
    <text evidence="2">Hormone involved in the regulation of erythrocyte proliferation and differentiation and the maintenance of a physiological level of circulating erythrocyte mass. Binds to EPOR leading to EPOR dimerization and JAK2 activation thereby activating specific downstream effectors, including STAT1 and STAT3.</text>
</comment>
<comment type="subcellular location">
    <subcellularLocation>
        <location>Secreted</location>
    </subcellularLocation>
</comment>
<comment type="tissue specificity">
    <text>Produced by kidney or liver of adult mammals and by liver of fetal or neonatal mammals.</text>
</comment>
<comment type="similarity">
    <text evidence="4">Belongs to the EPO/TPO family.</text>
</comment>
<feature type="signal peptide" evidence="1">
    <location>
        <begin position="1"/>
        <end position="27"/>
    </location>
</feature>
<feature type="chain" id="PRO_0000008409" description="Erythropoietin">
    <location>
        <begin position="28"/>
        <end position="194"/>
    </location>
</feature>
<feature type="glycosylation site" description="N-linked (GlcNAc...) asparagine" evidence="3">
    <location>
        <position position="51"/>
    </location>
</feature>
<feature type="glycosylation site" description="N-linked (GlcNAc...) asparagine" evidence="3">
    <location>
        <position position="65"/>
    </location>
</feature>
<feature type="glycosylation site" description="N-linked (GlcNAc...) asparagine" evidence="3">
    <location>
        <position position="110"/>
    </location>
</feature>
<feature type="disulfide bond" evidence="1">
    <location>
        <begin position="34"/>
        <end position="189"/>
    </location>
</feature>
<feature type="disulfide bond" evidence="1">
    <location>
        <begin position="56"/>
        <end position="60"/>
    </location>
</feature>
<feature type="sequence conflict" description="In Ref. 2; AAA31518." evidence="4" ref="2">
    <original>F</original>
    <variation>L</variation>
    <location>
        <position position="16"/>
    </location>
</feature>
<feature type="sequence conflict" description="In Ref. 2; AAA31518." evidence="4" ref="2">
    <original>L</original>
    <variation>P</variation>
    <location>
        <position position="108"/>
    </location>
</feature>
<accession>P33709</accession>
<accession>Q28572</accession>
<gene>
    <name type="primary">EPO</name>
</gene>
<evidence type="ECO:0000250" key="1"/>
<evidence type="ECO:0000250" key="2">
    <source>
        <dbReference type="UniProtKB" id="P01588"/>
    </source>
</evidence>
<evidence type="ECO:0000255" key="3"/>
<evidence type="ECO:0000305" key="4"/>
<name>EPO_SHEEP</name>
<reference key="1">
    <citation type="journal article" date="1993" name="Mol. Cell. Endocrinol.">
        <title>The sheep erythropoietin gene: molecular cloning and effect of hemorrhage on plasma erythropoietin and renal/liver messenger RNA in adult sheep.</title>
        <authorList>
            <person name="Fu P."/>
            <person name="Evans B."/>
            <person name="Lim G.B."/>
            <person name="Moritz K."/>
            <person name="Wintour M.E."/>
        </authorList>
    </citation>
    <scope>NUCLEOTIDE SEQUENCE [MRNA]</scope>
    <source>
        <tissue>Kidney</tissue>
    </source>
</reference>
<reference key="2">
    <citation type="journal article" date="1993" name="Blood">
        <title>Erythropoietin structure-function relationships: high degree of sequence homology among mammals.</title>
        <authorList>
            <person name="Wen D."/>
            <person name="Boissel J.-P.R."/>
            <person name="Tracy T.E."/>
            <person name="Gruninger R.H."/>
            <person name="Mulcahy L.S."/>
            <person name="Czelusniak J."/>
            <person name="Goodman M."/>
            <person name="Bunn H.F."/>
        </authorList>
    </citation>
    <scope>NUCLEOTIDE SEQUENCE [MRNA] OF 4-194</scope>
    <source>
        <tissue>Kidney</tissue>
    </source>
</reference>
<keyword id="KW-1015">Disulfide bond</keyword>
<keyword id="KW-0265">Erythrocyte maturation</keyword>
<keyword id="KW-0325">Glycoprotein</keyword>
<keyword id="KW-0372">Hormone</keyword>
<keyword id="KW-1185">Reference proteome</keyword>
<keyword id="KW-0964">Secreted</keyword>
<keyword id="KW-0732">Signal</keyword>
<dbReference type="EMBL" id="Z24681">
    <property type="protein sequence ID" value="CAA80848.1"/>
    <property type="molecule type" value="mRNA"/>
</dbReference>
<dbReference type="EMBL" id="L10610">
    <property type="protein sequence ID" value="AAA31518.1"/>
    <property type="molecule type" value="mRNA"/>
</dbReference>
<dbReference type="PIR" id="I46401">
    <property type="entry name" value="I46401"/>
</dbReference>
<dbReference type="RefSeq" id="NP_001019908.1">
    <property type="nucleotide sequence ID" value="NM_001024737.1"/>
</dbReference>
<dbReference type="SMR" id="P33709"/>
<dbReference type="STRING" id="9940.ENSOARP00000017231"/>
<dbReference type="GlyCosmos" id="P33709">
    <property type="glycosylation" value="3 sites, No reported glycans"/>
</dbReference>
<dbReference type="PaxDb" id="9940-ENSOARP00000017231"/>
<dbReference type="Ensembl" id="ENSOART00040032882">
    <property type="protein sequence ID" value="ENSOARP00040016958"/>
    <property type="gene ID" value="ENSOARG00040019767"/>
</dbReference>
<dbReference type="Ensembl" id="ENSOART00180048361">
    <property type="protein sequence ID" value="ENSOARP00180024570"/>
    <property type="gene ID" value="ENSOARG00180029311"/>
</dbReference>
<dbReference type="Ensembl" id="ENSOART00215056462">
    <property type="protein sequence ID" value="ENSOARP00215029681"/>
    <property type="gene ID" value="ENSOARG00215033718"/>
</dbReference>
<dbReference type="Ensembl" id="ENSOART00220061596">
    <property type="protein sequence ID" value="ENSOARP00220032985"/>
    <property type="gene ID" value="ENSOARG00220037193"/>
</dbReference>
<dbReference type="Ensembl" id="ENSOART00225016217">
    <property type="protein sequence ID" value="ENSOARP00225007914"/>
    <property type="gene ID" value="ENSOARG00225009827"/>
</dbReference>
<dbReference type="GeneID" id="443302"/>
<dbReference type="KEGG" id="oas:443302"/>
<dbReference type="CTD" id="2056"/>
<dbReference type="eggNOG" id="ENOG502RXRC">
    <property type="taxonomic scope" value="Eukaryota"/>
</dbReference>
<dbReference type="HOGENOM" id="CLU_110946_0_0_1"/>
<dbReference type="OMA" id="AMEFPRL"/>
<dbReference type="OrthoDB" id="9892121at2759"/>
<dbReference type="Proteomes" id="UP000002356">
    <property type="component" value="Chromosome 24"/>
</dbReference>
<dbReference type="Bgee" id="ENSOARG00000016044">
    <property type="expression patterns" value="Expressed in embryo and 3 other cell types or tissues"/>
</dbReference>
<dbReference type="GO" id="GO:0009986">
    <property type="term" value="C:cell surface"/>
    <property type="evidence" value="ECO:0007669"/>
    <property type="project" value="Ensembl"/>
</dbReference>
<dbReference type="GO" id="GO:0005615">
    <property type="term" value="C:extracellular space"/>
    <property type="evidence" value="ECO:0007669"/>
    <property type="project" value="Ensembl"/>
</dbReference>
<dbReference type="GO" id="GO:0005125">
    <property type="term" value="F:cytokine activity"/>
    <property type="evidence" value="ECO:0007669"/>
    <property type="project" value="Ensembl"/>
</dbReference>
<dbReference type="GO" id="GO:0005128">
    <property type="term" value="F:erythropoietin receptor binding"/>
    <property type="evidence" value="ECO:0000250"/>
    <property type="project" value="UniProtKB"/>
</dbReference>
<dbReference type="GO" id="GO:0005179">
    <property type="term" value="F:hormone activity"/>
    <property type="evidence" value="ECO:0007669"/>
    <property type="project" value="UniProtKB-KW"/>
</dbReference>
<dbReference type="GO" id="GO:0030295">
    <property type="term" value="F:protein kinase activator activity"/>
    <property type="evidence" value="ECO:0007669"/>
    <property type="project" value="Ensembl"/>
</dbReference>
<dbReference type="GO" id="GO:0097696">
    <property type="term" value="P:cell surface receptor signaling pathway via STAT"/>
    <property type="evidence" value="ECO:0007669"/>
    <property type="project" value="Ensembl"/>
</dbReference>
<dbReference type="GO" id="GO:0071474">
    <property type="term" value="P:cellular hyperosmotic response"/>
    <property type="evidence" value="ECO:0007669"/>
    <property type="project" value="Ensembl"/>
</dbReference>
<dbReference type="GO" id="GO:0007566">
    <property type="term" value="P:embryo implantation"/>
    <property type="evidence" value="ECO:0007669"/>
    <property type="project" value="Ensembl"/>
</dbReference>
<dbReference type="GO" id="GO:0030218">
    <property type="term" value="P:erythrocyte differentiation"/>
    <property type="evidence" value="ECO:0000250"/>
    <property type="project" value="UniProtKB"/>
</dbReference>
<dbReference type="GO" id="GO:0043249">
    <property type="term" value="P:erythrocyte maturation"/>
    <property type="evidence" value="ECO:0007669"/>
    <property type="project" value="UniProtKB-KW"/>
</dbReference>
<dbReference type="GO" id="GO:0038162">
    <property type="term" value="P:erythropoietin-mediated signaling pathway"/>
    <property type="evidence" value="ECO:0000250"/>
    <property type="project" value="UniProtKB"/>
</dbReference>
<dbReference type="GO" id="GO:0042541">
    <property type="term" value="P:hemoglobin biosynthetic process"/>
    <property type="evidence" value="ECO:0007669"/>
    <property type="project" value="Ensembl"/>
</dbReference>
<dbReference type="GO" id="GO:0033028">
    <property type="term" value="P:myeloid cell apoptotic process"/>
    <property type="evidence" value="ECO:0007669"/>
    <property type="project" value="Ensembl"/>
</dbReference>
<dbReference type="GO" id="GO:0010523">
    <property type="term" value="P:negative regulation of calcium ion transport into cytosol"/>
    <property type="evidence" value="ECO:0007669"/>
    <property type="project" value="Ensembl"/>
</dbReference>
<dbReference type="GO" id="GO:1902251">
    <property type="term" value="P:negative regulation of erythrocyte apoptotic process"/>
    <property type="evidence" value="ECO:0007669"/>
    <property type="project" value="Ensembl"/>
</dbReference>
<dbReference type="GO" id="GO:1902219">
    <property type="term" value="P:negative regulation of intrinsic apoptotic signaling pathway in response to osmotic stress"/>
    <property type="evidence" value="ECO:0007669"/>
    <property type="project" value="Ensembl"/>
</dbReference>
<dbReference type="GO" id="GO:0000122">
    <property type="term" value="P:negative regulation of transcription by RNA polymerase II"/>
    <property type="evidence" value="ECO:0007669"/>
    <property type="project" value="Ensembl"/>
</dbReference>
<dbReference type="GO" id="GO:0008284">
    <property type="term" value="P:positive regulation of cell population proliferation"/>
    <property type="evidence" value="ECO:0007669"/>
    <property type="project" value="Ensembl"/>
</dbReference>
<dbReference type="GO" id="GO:0045893">
    <property type="term" value="P:positive regulation of DNA-templated transcription"/>
    <property type="evidence" value="ECO:0007669"/>
    <property type="project" value="Ensembl"/>
</dbReference>
<dbReference type="GO" id="GO:0046579">
    <property type="term" value="P:positive regulation of Ras protein signal transduction"/>
    <property type="evidence" value="ECO:0007669"/>
    <property type="project" value="Ensembl"/>
</dbReference>
<dbReference type="GO" id="GO:0001666">
    <property type="term" value="P:response to hypoxia"/>
    <property type="evidence" value="ECO:0007669"/>
    <property type="project" value="Ensembl"/>
</dbReference>
<dbReference type="FunFam" id="1.20.1250.10:FF:000013">
    <property type="entry name" value="Erythropoietin"/>
    <property type="match status" value="1"/>
</dbReference>
<dbReference type="Gene3D" id="1.20.1250.10">
    <property type="match status" value="1"/>
</dbReference>
<dbReference type="InterPro" id="IPR009079">
    <property type="entry name" value="4_helix_cytokine-like_core"/>
</dbReference>
<dbReference type="InterPro" id="IPR019767">
    <property type="entry name" value="EPO/TPO_CS"/>
</dbReference>
<dbReference type="InterPro" id="IPR001323">
    <property type="entry name" value="EPO_TPO"/>
</dbReference>
<dbReference type="InterPro" id="IPR003013">
    <property type="entry name" value="Erythroptn"/>
</dbReference>
<dbReference type="PANTHER" id="PTHR10370">
    <property type="entry name" value="ERYTHROPOIETIN"/>
    <property type="match status" value="1"/>
</dbReference>
<dbReference type="PANTHER" id="PTHR10370:SF0">
    <property type="entry name" value="ERYTHROPOIETIN"/>
    <property type="match status" value="1"/>
</dbReference>
<dbReference type="Pfam" id="PF00758">
    <property type="entry name" value="EPO_TPO"/>
    <property type="match status" value="1"/>
</dbReference>
<dbReference type="PIRSF" id="PIRSF001951">
    <property type="entry name" value="EPO"/>
    <property type="match status" value="1"/>
</dbReference>
<dbReference type="PRINTS" id="PR00272">
    <property type="entry name" value="ERYTHROPTN"/>
</dbReference>
<dbReference type="SUPFAM" id="SSF47266">
    <property type="entry name" value="4-helical cytokines"/>
    <property type="match status" value="1"/>
</dbReference>
<dbReference type="PROSITE" id="PS00817">
    <property type="entry name" value="EPO_TPO"/>
    <property type="match status" value="1"/>
</dbReference>
<sequence length="194" mass="21335">MGARDCTPLLLLLLSFLLFPLGLPVLGAPPRLICDSRVLERYILEAREAENATMGCAEGCSFSENITVPDTKVNFYAWKRMEVQQQALEVWQGLALLSEAIFRGQALLANASQPCEALRLHVDKAVSGLRSLTSLLRALGAQKEAIPLPDATPSAAPLRIFTVDALSKLFRIYSNFLRGKLTLYTGEACRRGDR</sequence>
<protein>
    <recommendedName>
        <fullName>Erythropoietin</fullName>
    </recommendedName>
</protein>
<organism>
    <name type="scientific">Ovis aries</name>
    <name type="common">Sheep</name>
    <dbReference type="NCBI Taxonomy" id="9940"/>
    <lineage>
        <taxon>Eukaryota</taxon>
        <taxon>Metazoa</taxon>
        <taxon>Chordata</taxon>
        <taxon>Craniata</taxon>
        <taxon>Vertebrata</taxon>
        <taxon>Euteleostomi</taxon>
        <taxon>Mammalia</taxon>
        <taxon>Eutheria</taxon>
        <taxon>Laurasiatheria</taxon>
        <taxon>Artiodactyla</taxon>
        <taxon>Ruminantia</taxon>
        <taxon>Pecora</taxon>
        <taxon>Bovidae</taxon>
        <taxon>Caprinae</taxon>
        <taxon>Ovis</taxon>
    </lineage>
</organism>
<proteinExistence type="evidence at transcript level"/>